<gene>
    <name type="primary">FAM228B</name>
</gene>
<proteinExistence type="evidence at protein level"/>
<sequence length="324" mass="38070">MKNVDSDDLVTGTLPKLKSSKEWLEPKPLCFMEVLAKEDTEAAIQSILYKENSVIKELDKYLQHHAFLNARRKEMLYKRWVDCVADPLQKKIIEKVCSHKKIKKRRQGELDGFLKHVNKKGNAFIEHYDPKEYDPFYMSKKDPNFLKVTIPPFHDPLKKAQYDKDNEKRTLLQCETGKIYSIKEFKEVEKVQLHSRFPQISNSRHFITPNEWLKLPTRYIESEFCRRRRLKVKVNFNDCSFDLKPLARAPYLLESQEEEKTVIYKNKGSSFLEREPLCYQEGNNPSAKEAISEGYFSSLSLSQEREEDQDGSPSPRLGLLKLEL</sequence>
<evidence type="ECO:0000305" key="1"/>
<feature type="chain" id="PRO_0000348449" description="Protein FAM228B">
    <location>
        <begin position="1"/>
        <end position="324"/>
    </location>
</feature>
<reference key="1">
    <citation type="journal article" date="2005" name="Nature">
        <title>Generation and annotation of the DNA sequences of human chromosomes 2 and 4.</title>
        <authorList>
            <person name="Hillier L.W."/>
            <person name="Graves T.A."/>
            <person name="Fulton R.S."/>
            <person name="Fulton L.A."/>
            <person name="Pepin K.H."/>
            <person name="Minx P."/>
            <person name="Wagner-McPherson C."/>
            <person name="Layman D."/>
            <person name="Wylie K."/>
            <person name="Sekhon M."/>
            <person name="Becker M.C."/>
            <person name="Fewell G.A."/>
            <person name="Delehaunty K.D."/>
            <person name="Miner T.L."/>
            <person name="Nash W.E."/>
            <person name="Kremitzki C."/>
            <person name="Oddy L."/>
            <person name="Du H."/>
            <person name="Sun H."/>
            <person name="Bradshaw-Cordum H."/>
            <person name="Ali J."/>
            <person name="Carter J."/>
            <person name="Cordes M."/>
            <person name="Harris A."/>
            <person name="Isak A."/>
            <person name="van Brunt A."/>
            <person name="Nguyen C."/>
            <person name="Du F."/>
            <person name="Courtney L."/>
            <person name="Kalicki J."/>
            <person name="Ozersky P."/>
            <person name="Abbott S."/>
            <person name="Armstrong J."/>
            <person name="Belter E.A."/>
            <person name="Caruso L."/>
            <person name="Cedroni M."/>
            <person name="Cotton M."/>
            <person name="Davidson T."/>
            <person name="Desai A."/>
            <person name="Elliott G."/>
            <person name="Erb T."/>
            <person name="Fronick C."/>
            <person name="Gaige T."/>
            <person name="Haakenson W."/>
            <person name="Haglund K."/>
            <person name="Holmes A."/>
            <person name="Harkins R."/>
            <person name="Kim K."/>
            <person name="Kruchowski S.S."/>
            <person name="Strong C.M."/>
            <person name="Grewal N."/>
            <person name="Goyea E."/>
            <person name="Hou S."/>
            <person name="Levy A."/>
            <person name="Martinka S."/>
            <person name="Mead K."/>
            <person name="McLellan M.D."/>
            <person name="Meyer R."/>
            <person name="Randall-Maher J."/>
            <person name="Tomlinson C."/>
            <person name="Dauphin-Kohlberg S."/>
            <person name="Kozlowicz-Reilly A."/>
            <person name="Shah N."/>
            <person name="Swearengen-Shahid S."/>
            <person name="Snider J."/>
            <person name="Strong J.T."/>
            <person name="Thompson J."/>
            <person name="Yoakum M."/>
            <person name="Leonard S."/>
            <person name="Pearman C."/>
            <person name="Trani L."/>
            <person name="Radionenko M."/>
            <person name="Waligorski J.E."/>
            <person name="Wang C."/>
            <person name="Rock S.M."/>
            <person name="Tin-Wollam A.-M."/>
            <person name="Maupin R."/>
            <person name="Latreille P."/>
            <person name="Wendl M.C."/>
            <person name="Yang S.-P."/>
            <person name="Pohl C."/>
            <person name="Wallis J.W."/>
            <person name="Spieth J."/>
            <person name="Bieri T.A."/>
            <person name="Berkowicz N."/>
            <person name="Nelson J.O."/>
            <person name="Osborne J."/>
            <person name="Ding L."/>
            <person name="Meyer R."/>
            <person name="Sabo A."/>
            <person name="Shotland Y."/>
            <person name="Sinha P."/>
            <person name="Wohldmann P.E."/>
            <person name="Cook L.L."/>
            <person name="Hickenbotham M.T."/>
            <person name="Eldred J."/>
            <person name="Williams D."/>
            <person name="Jones T.A."/>
            <person name="She X."/>
            <person name="Ciccarelli F.D."/>
            <person name="Izaurralde E."/>
            <person name="Taylor J."/>
            <person name="Schmutz J."/>
            <person name="Myers R.M."/>
            <person name="Cox D.R."/>
            <person name="Huang X."/>
            <person name="McPherson J.D."/>
            <person name="Mardis E.R."/>
            <person name="Clifton S.W."/>
            <person name="Warren W.C."/>
            <person name="Chinwalla A.T."/>
            <person name="Eddy S.R."/>
            <person name="Marra M.A."/>
            <person name="Ovcharenko I."/>
            <person name="Furey T.S."/>
            <person name="Miller W."/>
            <person name="Eichler E.E."/>
            <person name="Bork P."/>
            <person name="Suyama M."/>
            <person name="Torrents D."/>
            <person name="Waterston R.H."/>
            <person name="Wilson R.K."/>
        </authorList>
    </citation>
    <scope>NUCLEOTIDE SEQUENCE [LARGE SCALE GENOMIC DNA]</scope>
</reference>
<reference key="2">
    <citation type="submission" date="2005-09" db="EMBL/GenBank/DDBJ databases">
        <authorList>
            <person name="Mural R.J."/>
            <person name="Istrail S."/>
            <person name="Sutton G.G."/>
            <person name="Florea L."/>
            <person name="Halpern A.L."/>
            <person name="Mobarry C.M."/>
            <person name="Lippert R."/>
            <person name="Walenz B."/>
            <person name="Shatkay H."/>
            <person name="Dew I."/>
            <person name="Miller J.R."/>
            <person name="Flanigan M.J."/>
            <person name="Edwards N.J."/>
            <person name="Bolanos R."/>
            <person name="Fasulo D."/>
            <person name="Halldorsson B.V."/>
            <person name="Hannenhalli S."/>
            <person name="Turner R."/>
            <person name="Yooseph S."/>
            <person name="Lu F."/>
            <person name="Nusskern D.R."/>
            <person name="Shue B.C."/>
            <person name="Zheng X.H."/>
            <person name="Zhong F."/>
            <person name="Delcher A.L."/>
            <person name="Huson D.H."/>
            <person name="Kravitz S.A."/>
            <person name="Mouchard L."/>
            <person name="Reinert K."/>
            <person name="Remington K.A."/>
            <person name="Clark A.G."/>
            <person name="Waterman M.S."/>
            <person name="Eichler E.E."/>
            <person name="Adams M.D."/>
            <person name="Hunkapiller M.W."/>
            <person name="Myers E.W."/>
            <person name="Venter J.C."/>
        </authorList>
    </citation>
    <scope>NUCLEOTIDE SEQUENCE [LARGE SCALE GENOMIC DNA]</scope>
</reference>
<reference key="3">
    <citation type="journal article" date="2004" name="Nat. Genet.">
        <title>Complete sequencing and characterization of 21,243 full-length human cDNAs.</title>
        <authorList>
            <person name="Ota T."/>
            <person name="Suzuki Y."/>
            <person name="Nishikawa T."/>
            <person name="Otsuki T."/>
            <person name="Sugiyama T."/>
            <person name="Irie R."/>
            <person name="Wakamatsu A."/>
            <person name="Hayashi K."/>
            <person name="Sato H."/>
            <person name="Nagai K."/>
            <person name="Kimura K."/>
            <person name="Makita H."/>
            <person name="Sekine M."/>
            <person name="Obayashi M."/>
            <person name="Nishi T."/>
            <person name="Shibahara T."/>
            <person name="Tanaka T."/>
            <person name="Ishii S."/>
            <person name="Yamamoto J."/>
            <person name="Saito K."/>
            <person name="Kawai Y."/>
            <person name="Isono Y."/>
            <person name="Nakamura Y."/>
            <person name="Nagahari K."/>
            <person name="Murakami K."/>
            <person name="Yasuda T."/>
            <person name="Iwayanagi T."/>
            <person name="Wagatsuma M."/>
            <person name="Shiratori A."/>
            <person name="Sudo H."/>
            <person name="Hosoiri T."/>
            <person name="Kaku Y."/>
            <person name="Kodaira H."/>
            <person name="Kondo H."/>
            <person name="Sugawara M."/>
            <person name="Takahashi M."/>
            <person name="Kanda K."/>
            <person name="Yokoi T."/>
            <person name="Furuya T."/>
            <person name="Kikkawa E."/>
            <person name="Omura Y."/>
            <person name="Abe K."/>
            <person name="Kamihara K."/>
            <person name="Katsuta N."/>
            <person name="Sato K."/>
            <person name="Tanikawa M."/>
            <person name="Yamazaki M."/>
            <person name="Ninomiya K."/>
            <person name="Ishibashi T."/>
            <person name="Yamashita H."/>
            <person name="Murakawa K."/>
            <person name="Fujimori K."/>
            <person name="Tanai H."/>
            <person name="Kimata M."/>
            <person name="Watanabe M."/>
            <person name="Hiraoka S."/>
            <person name="Chiba Y."/>
            <person name="Ishida S."/>
            <person name="Ono Y."/>
            <person name="Takiguchi S."/>
            <person name="Watanabe S."/>
            <person name="Yosida M."/>
            <person name="Hotuta T."/>
            <person name="Kusano J."/>
            <person name="Kanehori K."/>
            <person name="Takahashi-Fujii A."/>
            <person name="Hara H."/>
            <person name="Tanase T.-O."/>
            <person name="Nomura Y."/>
            <person name="Togiya S."/>
            <person name="Komai F."/>
            <person name="Hara R."/>
            <person name="Takeuchi K."/>
            <person name="Arita M."/>
            <person name="Imose N."/>
            <person name="Musashino K."/>
            <person name="Yuuki H."/>
            <person name="Oshima A."/>
            <person name="Sasaki N."/>
            <person name="Aotsuka S."/>
            <person name="Yoshikawa Y."/>
            <person name="Matsunawa H."/>
            <person name="Ichihara T."/>
            <person name="Shiohata N."/>
            <person name="Sano S."/>
            <person name="Moriya S."/>
            <person name="Momiyama H."/>
            <person name="Satoh N."/>
            <person name="Takami S."/>
            <person name="Terashima Y."/>
            <person name="Suzuki O."/>
            <person name="Nakagawa S."/>
            <person name="Senoh A."/>
            <person name="Mizoguchi H."/>
            <person name="Goto Y."/>
            <person name="Shimizu F."/>
            <person name="Wakebe H."/>
            <person name="Hishigaki H."/>
            <person name="Watanabe T."/>
            <person name="Sugiyama A."/>
            <person name="Takemoto M."/>
            <person name="Kawakami B."/>
            <person name="Yamazaki M."/>
            <person name="Watanabe K."/>
            <person name="Kumagai A."/>
            <person name="Itakura S."/>
            <person name="Fukuzumi Y."/>
            <person name="Fujimori Y."/>
            <person name="Komiyama M."/>
            <person name="Tashiro H."/>
            <person name="Tanigami A."/>
            <person name="Fujiwara T."/>
            <person name="Ono T."/>
            <person name="Yamada K."/>
            <person name="Fujii Y."/>
            <person name="Ozaki K."/>
            <person name="Hirao M."/>
            <person name="Ohmori Y."/>
            <person name="Kawabata A."/>
            <person name="Hikiji T."/>
            <person name="Kobatake N."/>
            <person name="Inagaki H."/>
            <person name="Ikema Y."/>
            <person name="Okamoto S."/>
            <person name="Okitani R."/>
            <person name="Kawakami T."/>
            <person name="Noguchi S."/>
            <person name="Itoh T."/>
            <person name="Shigeta K."/>
            <person name="Senba T."/>
            <person name="Matsumura K."/>
            <person name="Nakajima Y."/>
            <person name="Mizuno T."/>
            <person name="Morinaga M."/>
            <person name="Sasaki M."/>
            <person name="Togashi T."/>
            <person name="Oyama M."/>
            <person name="Hata H."/>
            <person name="Watanabe M."/>
            <person name="Komatsu T."/>
            <person name="Mizushima-Sugano J."/>
            <person name="Satoh T."/>
            <person name="Shirai Y."/>
            <person name="Takahashi Y."/>
            <person name="Nakagawa K."/>
            <person name="Okumura K."/>
            <person name="Nagase T."/>
            <person name="Nomura N."/>
            <person name="Kikuchi H."/>
            <person name="Masuho Y."/>
            <person name="Yamashita R."/>
            <person name="Nakai K."/>
            <person name="Yada T."/>
            <person name="Nakamura Y."/>
            <person name="Ohara O."/>
            <person name="Isogai T."/>
            <person name="Sugano S."/>
        </authorList>
    </citation>
    <scope>NUCLEOTIDE SEQUENCE [LARGE SCALE MRNA] OF 3-229</scope>
    <source>
        <tissue>Brain</tissue>
    </source>
</reference>
<organism>
    <name type="scientific">Homo sapiens</name>
    <name type="common">Human</name>
    <dbReference type="NCBI Taxonomy" id="9606"/>
    <lineage>
        <taxon>Eukaryota</taxon>
        <taxon>Metazoa</taxon>
        <taxon>Chordata</taxon>
        <taxon>Craniata</taxon>
        <taxon>Vertebrata</taxon>
        <taxon>Euteleostomi</taxon>
        <taxon>Mammalia</taxon>
        <taxon>Eutheria</taxon>
        <taxon>Euarchontoglires</taxon>
        <taxon>Primates</taxon>
        <taxon>Haplorrhini</taxon>
        <taxon>Catarrhini</taxon>
        <taxon>Hominidae</taxon>
        <taxon>Homo</taxon>
    </lineage>
</organism>
<accession>P0C875</accession>
<accession>A0A087WZA1</accession>
<protein>
    <recommendedName>
        <fullName>Protein FAM228B</fullName>
    </recommendedName>
</protein>
<dbReference type="EMBL" id="AC008073">
    <property type="status" value="NOT_ANNOTATED_CDS"/>
    <property type="molecule type" value="Genomic_DNA"/>
</dbReference>
<dbReference type="EMBL" id="KF459608">
    <property type="status" value="NOT_ANNOTATED_CDS"/>
    <property type="molecule type" value="Genomic_DNA"/>
</dbReference>
<dbReference type="EMBL" id="CH471053">
    <property type="protein sequence ID" value="EAX00757.1"/>
    <property type="molecule type" value="Genomic_DNA"/>
</dbReference>
<dbReference type="EMBL" id="AK055413">
    <property type="status" value="NOT_ANNOTATED_CDS"/>
    <property type="molecule type" value="mRNA"/>
</dbReference>
<dbReference type="CCDS" id="CCDS74491.1"/>
<dbReference type="RefSeq" id="NP_001139182.1">
    <property type="nucleotide sequence ID" value="NM_001145710.2"/>
</dbReference>
<dbReference type="FunCoup" id="P0C875">
    <property type="interactions" value="143"/>
</dbReference>
<dbReference type="STRING" id="9606.ENSP00000482482"/>
<dbReference type="iPTMnet" id="P0C875"/>
<dbReference type="PhosphoSitePlus" id="P0C875"/>
<dbReference type="BioMuta" id="FAM228B"/>
<dbReference type="DMDM" id="205830714"/>
<dbReference type="MassIVE" id="P0C875"/>
<dbReference type="PaxDb" id="9606-ENSP00000482482"/>
<dbReference type="PeptideAtlas" id="P0C875"/>
<dbReference type="Antibodypedia" id="64511">
    <property type="antibodies" value="10 antibodies from 6 providers"/>
</dbReference>
<dbReference type="DNASU" id="375190"/>
<dbReference type="Ensembl" id="ENST00000611127.4">
    <property type="protein sequence ID" value="ENSP00000483011.1"/>
    <property type="gene ID" value="ENSG00000219626.9"/>
</dbReference>
<dbReference type="Ensembl" id="ENST00000615575.5">
    <property type="protein sequence ID" value="ENSP00000482482.1"/>
    <property type="gene ID" value="ENSG00000219626.9"/>
</dbReference>
<dbReference type="GeneID" id="375190"/>
<dbReference type="KEGG" id="hsa:375190"/>
<dbReference type="MANE-Select" id="ENST00000615575.5">
    <property type="protein sequence ID" value="ENSP00000482482.1"/>
    <property type="RefSeq nucleotide sequence ID" value="NM_001145710.2"/>
    <property type="RefSeq protein sequence ID" value="NP_001139182.1"/>
</dbReference>
<dbReference type="UCSC" id="uc032ngu.2">
    <property type="organism name" value="human"/>
</dbReference>
<dbReference type="AGR" id="HGNC:24736"/>
<dbReference type="CTD" id="375190"/>
<dbReference type="DisGeNET" id="375190"/>
<dbReference type="GeneCards" id="FAM228B"/>
<dbReference type="HGNC" id="HGNC:24736">
    <property type="gene designation" value="FAM228B"/>
</dbReference>
<dbReference type="HPA" id="ENSG00000219626">
    <property type="expression patterns" value="Low tissue specificity"/>
</dbReference>
<dbReference type="neXtProt" id="NX_P0C875"/>
<dbReference type="OpenTargets" id="ENSG00000219626"/>
<dbReference type="VEuPathDB" id="HostDB:ENSG00000219626"/>
<dbReference type="eggNOG" id="ENOG502S14E">
    <property type="taxonomic scope" value="Eukaryota"/>
</dbReference>
<dbReference type="GeneTree" id="ENSGT00530000064185"/>
<dbReference type="InParanoid" id="P0C875"/>
<dbReference type="OMA" id="KVCSYKK"/>
<dbReference type="OrthoDB" id="9905773at2759"/>
<dbReference type="PAN-GO" id="P0C875">
    <property type="GO annotations" value="0 GO annotations based on evolutionary models"/>
</dbReference>
<dbReference type="PhylomeDB" id="P0C875"/>
<dbReference type="PathwayCommons" id="P0C875"/>
<dbReference type="BioGRID-ORCS" id="375190">
    <property type="hits" value="13 hits in 376 CRISPR screens"/>
</dbReference>
<dbReference type="ChiTaRS" id="FAM228B">
    <property type="organism name" value="human"/>
</dbReference>
<dbReference type="GenomeRNAi" id="375190"/>
<dbReference type="Pharos" id="P0C875">
    <property type="development level" value="Tdark"/>
</dbReference>
<dbReference type="PRO" id="PR:P0C875"/>
<dbReference type="Proteomes" id="UP000005640">
    <property type="component" value="Chromosome 2"/>
</dbReference>
<dbReference type="RNAct" id="P0C875">
    <property type="molecule type" value="protein"/>
</dbReference>
<dbReference type="Bgee" id="ENSG00000219626">
    <property type="expression patterns" value="Expressed in calcaneal tendon and 178 other cell types or tissues"/>
</dbReference>
<dbReference type="ExpressionAtlas" id="P0C875">
    <property type="expression patterns" value="baseline and differential"/>
</dbReference>
<dbReference type="InterPro" id="IPR040046">
    <property type="entry name" value="FAM228"/>
</dbReference>
<dbReference type="PANTHER" id="PTHR28584">
    <property type="entry name" value="FAMILY WITH SEQUENCE SIMILARITY 228 MEMBER A"/>
    <property type="match status" value="1"/>
</dbReference>
<dbReference type="PANTHER" id="PTHR28584:SF3">
    <property type="entry name" value="PROTEIN FAM228B"/>
    <property type="match status" value="1"/>
</dbReference>
<keyword id="KW-1267">Proteomics identification</keyword>
<keyword id="KW-1185">Reference proteome</keyword>
<comment type="similarity">
    <text evidence="1">Belongs to the FAM228 family.</text>
</comment>
<name>F228B_HUMAN</name>